<organism>
    <name type="scientific">Salmonella typhi</name>
    <dbReference type="NCBI Taxonomy" id="90370"/>
    <lineage>
        <taxon>Bacteria</taxon>
        <taxon>Pseudomonadati</taxon>
        <taxon>Pseudomonadota</taxon>
        <taxon>Gammaproteobacteria</taxon>
        <taxon>Enterobacterales</taxon>
        <taxon>Enterobacteriaceae</taxon>
        <taxon>Salmonella</taxon>
    </lineage>
</organism>
<dbReference type="EC" id="2.1.2.3" evidence="1"/>
<dbReference type="EC" id="3.5.4.10" evidence="1"/>
<dbReference type="EMBL" id="AL513382">
    <property type="protein sequence ID" value="CAD09468.1"/>
    <property type="molecule type" value="Genomic_DNA"/>
</dbReference>
<dbReference type="EMBL" id="AE014613">
    <property type="protein sequence ID" value="AAO70971.1"/>
    <property type="molecule type" value="Genomic_DNA"/>
</dbReference>
<dbReference type="RefSeq" id="NP_457898.1">
    <property type="nucleotide sequence ID" value="NC_003198.1"/>
</dbReference>
<dbReference type="RefSeq" id="WP_001187502.1">
    <property type="nucleotide sequence ID" value="NZ_PZMG01000032.1"/>
</dbReference>
<dbReference type="SMR" id="Q8Z335"/>
<dbReference type="STRING" id="220341.gene:17587569"/>
<dbReference type="KEGG" id="stt:t3455"/>
<dbReference type="KEGG" id="sty:STY3709"/>
<dbReference type="PATRIC" id="fig|220341.7.peg.3781"/>
<dbReference type="eggNOG" id="COG0138">
    <property type="taxonomic scope" value="Bacteria"/>
</dbReference>
<dbReference type="HOGENOM" id="CLU_016316_5_2_6"/>
<dbReference type="OMA" id="IKHNNPC"/>
<dbReference type="UniPathway" id="UPA00074">
    <property type="reaction ID" value="UER00133"/>
</dbReference>
<dbReference type="UniPathway" id="UPA00074">
    <property type="reaction ID" value="UER00135"/>
</dbReference>
<dbReference type="Proteomes" id="UP000000541">
    <property type="component" value="Chromosome"/>
</dbReference>
<dbReference type="Proteomes" id="UP000002670">
    <property type="component" value="Chromosome"/>
</dbReference>
<dbReference type="GO" id="GO:0005829">
    <property type="term" value="C:cytosol"/>
    <property type="evidence" value="ECO:0007669"/>
    <property type="project" value="TreeGrafter"/>
</dbReference>
<dbReference type="GO" id="GO:0003937">
    <property type="term" value="F:IMP cyclohydrolase activity"/>
    <property type="evidence" value="ECO:0007669"/>
    <property type="project" value="UniProtKB-UniRule"/>
</dbReference>
<dbReference type="GO" id="GO:0004643">
    <property type="term" value="F:phosphoribosylaminoimidazolecarboxamide formyltransferase activity"/>
    <property type="evidence" value="ECO:0007669"/>
    <property type="project" value="UniProtKB-UniRule"/>
</dbReference>
<dbReference type="GO" id="GO:0006189">
    <property type="term" value="P:'de novo' IMP biosynthetic process"/>
    <property type="evidence" value="ECO:0007669"/>
    <property type="project" value="UniProtKB-UniRule"/>
</dbReference>
<dbReference type="CDD" id="cd01421">
    <property type="entry name" value="IMPCH"/>
    <property type="match status" value="1"/>
</dbReference>
<dbReference type="FunFam" id="3.40.140.20:FF:000001">
    <property type="entry name" value="Bifunctional purine biosynthesis protein PurH"/>
    <property type="match status" value="1"/>
</dbReference>
<dbReference type="FunFam" id="3.40.140.20:FF:000002">
    <property type="entry name" value="Bifunctional purine biosynthesis protein PurH"/>
    <property type="match status" value="1"/>
</dbReference>
<dbReference type="FunFam" id="3.40.50.1380:FF:000001">
    <property type="entry name" value="Bifunctional purine biosynthesis protein PurH"/>
    <property type="match status" value="1"/>
</dbReference>
<dbReference type="Gene3D" id="3.40.140.20">
    <property type="match status" value="2"/>
</dbReference>
<dbReference type="Gene3D" id="3.40.50.1380">
    <property type="entry name" value="Methylglyoxal synthase-like domain"/>
    <property type="match status" value="1"/>
</dbReference>
<dbReference type="HAMAP" id="MF_00139">
    <property type="entry name" value="PurH"/>
    <property type="match status" value="1"/>
</dbReference>
<dbReference type="InterPro" id="IPR024051">
    <property type="entry name" value="AICAR_Tfase_dup_dom_sf"/>
</dbReference>
<dbReference type="InterPro" id="IPR016193">
    <property type="entry name" value="Cytidine_deaminase-like"/>
</dbReference>
<dbReference type="InterPro" id="IPR011607">
    <property type="entry name" value="MGS-like_dom"/>
</dbReference>
<dbReference type="InterPro" id="IPR036914">
    <property type="entry name" value="MGS-like_dom_sf"/>
</dbReference>
<dbReference type="InterPro" id="IPR002695">
    <property type="entry name" value="PurH-like"/>
</dbReference>
<dbReference type="NCBIfam" id="NF002049">
    <property type="entry name" value="PRK00881.1"/>
    <property type="match status" value="1"/>
</dbReference>
<dbReference type="NCBIfam" id="TIGR00355">
    <property type="entry name" value="purH"/>
    <property type="match status" value="1"/>
</dbReference>
<dbReference type="PANTHER" id="PTHR11692:SF0">
    <property type="entry name" value="BIFUNCTIONAL PURINE BIOSYNTHESIS PROTEIN ATIC"/>
    <property type="match status" value="1"/>
</dbReference>
<dbReference type="PANTHER" id="PTHR11692">
    <property type="entry name" value="BIFUNCTIONAL PURINE BIOSYNTHESIS PROTEIN PURH"/>
    <property type="match status" value="1"/>
</dbReference>
<dbReference type="Pfam" id="PF01808">
    <property type="entry name" value="AICARFT_IMPCHas"/>
    <property type="match status" value="1"/>
</dbReference>
<dbReference type="Pfam" id="PF02142">
    <property type="entry name" value="MGS"/>
    <property type="match status" value="1"/>
</dbReference>
<dbReference type="PIRSF" id="PIRSF000414">
    <property type="entry name" value="AICARFT_IMPCHas"/>
    <property type="match status" value="1"/>
</dbReference>
<dbReference type="SMART" id="SM00798">
    <property type="entry name" value="AICARFT_IMPCHas"/>
    <property type="match status" value="1"/>
</dbReference>
<dbReference type="SMART" id="SM00851">
    <property type="entry name" value="MGS"/>
    <property type="match status" value="1"/>
</dbReference>
<dbReference type="SUPFAM" id="SSF53927">
    <property type="entry name" value="Cytidine deaminase-like"/>
    <property type="match status" value="1"/>
</dbReference>
<dbReference type="SUPFAM" id="SSF52335">
    <property type="entry name" value="Methylglyoxal synthase-like"/>
    <property type="match status" value="1"/>
</dbReference>
<dbReference type="PROSITE" id="PS51855">
    <property type="entry name" value="MGS"/>
    <property type="match status" value="1"/>
</dbReference>
<gene>
    <name evidence="1" type="primary">purH</name>
    <name type="ordered locus">STY3709</name>
    <name type="ordered locus">t3455</name>
</gene>
<sequence>MQQRRPVRRALLSVSDKAGIIEFAQALSARGVELLSTGGTARLLAEKGLPVTEVSDYTGFPEMMDGRVKTLHPKVHGGILGRRGQDDAIMEQHHIAPIDMVVVNLYPFAETVAREGCSLADAVENIDIGGPTMVRSAAKNHKDVAIVVKSSDYDAIIKEMDANEGSLTLDTRFDLAIKAFEHTAAYDSMIANYFGSMVPAYHGESKEAAGRFPRTLNLNFIKKQDMRYGENSHQQAAFYIEENVKEASVATAQQIQGKALSYNNIADTDAALECVKEFNEPACVIVKHANPCGVAVSTSILDAYDRAYKTDPTSAFGGIIAFNRELDAETAQAIISRQFVEVLIAPSASEEALKITSAKQNVRVLTCGQWASRVPGLDFKRVNGGLLVQDRDLGMVSEAELRVVSKRQPTEQELRDALFCWKVAKFVKSNAIVYAKENMTIGIGAGQMSRVYSAKIASIKAADEGLEVKGSAMASDAFFPFRDGIDAAAAVGVSCVIQPGGSIRDDEVIAAADEHGIAMIFTDMRHFRH</sequence>
<accession>Q8Z335</accession>
<keyword id="KW-0378">Hydrolase</keyword>
<keyword id="KW-0511">Multifunctional enzyme</keyword>
<keyword id="KW-0658">Purine biosynthesis</keyword>
<keyword id="KW-0808">Transferase</keyword>
<proteinExistence type="inferred from homology"/>
<protein>
    <recommendedName>
        <fullName evidence="1">Bifunctional purine biosynthesis protein PurH</fullName>
    </recommendedName>
    <domain>
        <recommendedName>
            <fullName evidence="1">Phosphoribosylaminoimidazolecarboxamide formyltransferase</fullName>
            <ecNumber evidence="1">2.1.2.3</ecNumber>
        </recommendedName>
        <alternativeName>
            <fullName evidence="1">AICAR transformylase</fullName>
        </alternativeName>
    </domain>
    <domain>
        <recommendedName>
            <fullName evidence="1">IMP cyclohydrolase</fullName>
            <ecNumber evidence="1">3.5.4.10</ecNumber>
        </recommendedName>
        <alternativeName>
            <fullName evidence="1">ATIC</fullName>
        </alternativeName>
        <alternativeName>
            <fullName evidence="1">IMP synthase</fullName>
        </alternativeName>
        <alternativeName>
            <fullName evidence="1">Inosinicase</fullName>
        </alternativeName>
    </domain>
</protein>
<comment type="catalytic activity">
    <reaction evidence="1">
        <text>(6R)-10-formyltetrahydrofolate + 5-amino-1-(5-phospho-beta-D-ribosyl)imidazole-4-carboxamide = 5-formamido-1-(5-phospho-D-ribosyl)imidazole-4-carboxamide + (6S)-5,6,7,8-tetrahydrofolate</text>
        <dbReference type="Rhea" id="RHEA:22192"/>
        <dbReference type="ChEBI" id="CHEBI:57453"/>
        <dbReference type="ChEBI" id="CHEBI:58467"/>
        <dbReference type="ChEBI" id="CHEBI:58475"/>
        <dbReference type="ChEBI" id="CHEBI:195366"/>
        <dbReference type="EC" id="2.1.2.3"/>
    </reaction>
</comment>
<comment type="catalytic activity">
    <reaction evidence="1">
        <text>IMP + H2O = 5-formamido-1-(5-phospho-D-ribosyl)imidazole-4-carboxamide</text>
        <dbReference type="Rhea" id="RHEA:18445"/>
        <dbReference type="ChEBI" id="CHEBI:15377"/>
        <dbReference type="ChEBI" id="CHEBI:58053"/>
        <dbReference type="ChEBI" id="CHEBI:58467"/>
        <dbReference type="EC" id="3.5.4.10"/>
    </reaction>
</comment>
<comment type="pathway">
    <text evidence="1">Purine metabolism; IMP biosynthesis via de novo pathway; 5-formamido-1-(5-phospho-D-ribosyl)imidazole-4-carboxamide from 5-amino-1-(5-phospho-D-ribosyl)imidazole-4-carboxamide (10-formyl THF route): step 1/1.</text>
</comment>
<comment type="pathway">
    <text evidence="1">Purine metabolism; IMP biosynthesis via de novo pathway; IMP from 5-formamido-1-(5-phospho-D-ribosyl)imidazole-4-carboxamide: step 1/1.</text>
</comment>
<comment type="domain">
    <text evidence="1">The IMP cyclohydrolase activity resides in the N-terminal region.</text>
</comment>
<comment type="similarity">
    <text evidence="1">Belongs to the PurH family.</text>
</comment>
<reference key="1">
    <citation type="journal article" date="2001" name="Nature">
        <title>Complete genome sequence of a multiple drug resistant Salmonella enterica serovar Typhi CT18.</title>
        <authorList>
            <person name="Parkhill J."/>
            <person name="Dougan G."/>
            <person name="James K.D."/>
            <person name="Thomson N.R."/>
            <person name="Pickard D."/>
            <person name="Wain J."/>
            <person name="Churcher C.M."/>
            <person name="Mungall K.L."/>
            <person name="Bentley S.D."/>
            <person name="Holden M.T.G."/>
            <person name="Sebaihia M."/>
            <person name="Baker S."/>
            <person name="Basham D."/>
            <person name="Brooks K."/>
            <person name="Chillingworth T."/>
            <person name="Connerton P."/>
            <person name="Cronin A."/>
            <person name="Davis P."/>
            <person name="Davies R.M."/>
            <person name="Dowd L."/>
            <person name="White N."/>
            <person name="Farrar J."/>
            <person name="Feltwell T."/>
            <person name="Hamlin N."/>
            <person name="Haque A."/>
            <person name="Hien T.T."/>
            <person name="Holroyd S."/>
            <person name="Jagels K."/>
            <person name="Krogh A."/>
            <person name="Larsen T.S."/>
            <person name="Leather S."/>
            <person name="Moule S."/>
            <person name="O'Gaora P."/>
            <person name="Parry C."/>
            <person name="Quail M.A."/>
            <person name="Rutherford K.M."/>
            <person name="Simmonds M."/>
            <person name="Skelton J."/>
            <person name="Stevens K."/>
            <person name="Whitehead S."/>
            <person name="Barrell B.G."/>
        </authorList>
    </citation>
    <scope>NUCLEOTIDE SEQUENCE [LARGE SCALE GENOMIC DNA]</scope>
    <source>
        <strain>CT18</strain>
    </source>
</reference>
<reference key="2">
    <citation type="journal article" date="2003" name="J. Bacteriol.">
        <title>Comparative genomics of Salmonella enterica serovar Typhi strains Ty2 and CT18.</title>
        <authorList>
            <person name="Deng W."/>
            <person name="Liou S.-R."/>
            <person name="Plunkett G. III"/>
            <person name="Mayhew G.F."/>
            <person name="Rose D.J."/>
            <person name="Burland V."/>
            <person name="Kodoyianni V."/>
            <person name="Schwartz D.C."/>
            <person name="Blattner F.R."/>
        </authorList>
    </citation>
    <scope>NUCLEOTIDE SEQUENCE [LARGE SCALE GENOMIC DNA]</scope>
    <source>
        <strain>ATCC 700931 / Ty2</strain>
    </source>
</reference>
<evidence type="ECO:0000255" key="1">
    <source>
        <dbReference type="HAMAP-Rule" id="MF_00139"/>
    </source>
</evidence>
<evidence type="ECO:0000255" key="2">
    <source>
        <dbReference type="PROSITE-ProRule" id="PRU01202"/>
    </source>
</evidence>
<evidence type="ECO:0000305" key="3"/>
<feature type="chain" id="PRO_0000192119" description="Bifunctional purine biosynthesis protein PurH">
    <location>
        <begin position="1"/>
        <end position="529"/>
    </location>
</feature>
<feature type="domain" description="MGS-like" evidence="2">
    <location>
        <begin position="1"/>
        <end position="148"/>
    </location>
</feature>
<feature type="sequence conflict" description="In Ref. 2; AAO70971." evidence="3" ref="2">
    <original>S</original>
    <variation>G</variation>
    <location>
        <position position="458"/>
    </location>
</feature>
<name>PUR9_SALTI</name>